<sequence>MEELNTIKLSDHLTPFLTFNRQQWAELRKSVPLKLTEQDLKPLLGFNEELSLEEVSTIYLPLARLINYYIEENLRRQTVLKRFLSGHNPKVPYIISIAGSVSVGKSTSARILQSLLANWPVARKVDLITTDGFLYPLEILQKKNLLQKKGFPISYDTQRLIRFLADIKSGKKNVKAPIYSHLTYDIIPNQFDIVDRPDILILEGLNVLQIGTNKSNQMFVSDFVDFSIFVDAEEDQLKEWYIKRFLKFCRSAFTDPNSYFKHYANLSEQEAIETASQIWDNINGLNLKQNILPTRERANLILKKGENHKVELVKLRK</sequence>
<evidence type="ECO:0000255" key="1">
    <source>
        <dbReference type="HAMAP-Rule" id="MF_00215"/>
    </source>
</evidence>
<reference key="1">
    <citation type="journal article" date="2007" name="J. Bacteriol.">
        <title>Complete genome sequence of Haemophilus somnus (Histophilus somni) strain 129Pt and comparison to Haemophilus ducreyi 35000HP and Haemophilus influenzae Rd.</title>
        <authorList>
            <person name="Challacombe J.F."/>
            <person name="Duncan A.J."/>
            <person name="Brettin T.S."/>
            <person name="Bruce D."/>
            <person name="Chertkov O."/>
            <person name="Detter J.C."/>
            <person name="Han C.S."/>
            <person name="Misra M."/>
            <person name="Richardson P."/>
            <person name="Tapia R."/>
            <person name="Thayer N."/>
            <person name="Xie G."/>
            <person name="Inzana T.J."/>
        </authorList>
    </citation>
    <scope>NUCLEOTIDE SEQUENCE [LARGE SCALE GENOMIC DNA]</scope>
    <source>
        <strain>129Pt</strain>
    </source>
</reference>
<dbReference type="EC" id="2.7.1.33" evidence="1"/>
<dbReference type="EMBL" id="CP000436">
    <property type="protein sequence ID" value="ABI24474.1"/>
    <property type="molecule type" value="Genomic_DNA"/>
</dbReference>
<dbReference type="SMR" id="Q0I1U8"/>
<dbReference type="KEGG" id="hso:HS_0196"/>
<dbReference type="eggNOG" id="COG1072">
    <property type="taxonomic scope" value="Bacteria"/>
</dbReference>
<dbReference type="HOGENOM" id="CLU_053818_1_1_6"/>
<dbReference type="UniPathway" id="UPA00241">
    <property type="reaction ID" value="UER00352"/>
</dbReference>
<dbReference type="GO" id="GO:0005737">
    <property type="term" value="C:cytoplasm"/>
    <property type="evidence" value="ECO:0007669"/>
    <property type="project" value="UniProtKB-SubCell"/>
</dbReference>
<dbReference type="GO" id="GO:0005524">
    <property type="term" value="F:ATP binding"/>
    <property type="evidence" value="ECO:0007669"/>
    <property type="project" value="UniProtKB-UniRule"/>
</dbReference>
<dbReference type="GO" id="GO:0004594">
    <property type="term" value="F:pantothenate kinase activity"/>
    <property type="evidence" value="ECO:0007669"/>
    <property type="project" value="UniProtKB-UniRule"/>
</dbReference>
<dbReference type="GO" id="GO:0015937">
    <property type="term" value="P:coenzyme A biosynthetic process"/>
    <property type="evidence" value="ECO:0007669"/>
    <property type="project" value="UniProtKB-UniRule"/>
</dbReference>
<dbReference type="CDD" id="cd02025">
    <property type="entry name" value="PanK"/>
    <property type="match status" value="1"/>
</dbReference>
<dbReference type="FunFam" id="3.40.50.300:FF:000242">
    <property type="entry name" value="Pantothenate kinase"/>
    <property type="match status" value="1"/>
</dbReference>
<dbReference type="Gene3D" id="3.40.50.300">
    <property type="entry name" value="P-loop containing nucleotide triphosphate hydrolases"/>
    <property type="match status" value="1"/>
</dbReference>
<dbReference type="HAMAP" id="MF_00215">
    <property type="entry name" value="Pantothen_kinase_1"/>
    <property type="match status" value="1"/>
</dbReference>
<dbReference type="InterPro" id="IPR027417">
    <property type="entry name" value="P-loop_NTPase"/>
</dbReference>
<dbReference type="InterPro" id="IPR004566">
    <property type="entry name" value="PanK"/>
</dbReference>
<dbReference type="InterPro" id="IPR006083">
    <property type="entry name" value="PRK/URK"/>
</dbReference>
<dbReference type="NCBIfam" id="TIGR00554">
    <property type="entry name" value="panK_bact"/>
    <property type="match status" value="1"/>
</dbReference>
<dbReference type="PANTHER" id="PTHR10285">
    <property type="entry name" value="URIDINE KINASE"/>
    <property type="match status" value="1"/>
</dbReference>
<dbReference type="Pfam" id="PF00485">
    <property type="entry name" value="PRK"/>
    <property type="match status" value="1"/>
</dbReference>
<dbReference type="PIRSF" id="PIRSF000545">
    <property type="entry name" value="Pantothenate_kin"/>
    <property type="match status" value="1"/>
</dbReference>
<dbReference type="SUPFAM" id="SSF52540">
    <property type="entry name" value="P-loop containing nucleoside triphosphate hydrolases"/>
    <property type="match status" value="1"/>
</dbReference>
<protein>
    <recommendedName>
        <fullName evidence="1">Pantothenate kinase</fullName>
        <ecNumber evidence="1">2.7.1.33</ecNumber>
    </recommendedName>
    <alternativeName>
        <fullName evidence="1">Pantothenic acid kinase</fullName>
    </alternativeName>
</protein>
<comment type="catalytic activity">
    <reaction evidence="1">
        <text>(R)-pantothenate + ATP = (R)-4'-phosphopantothenate + ADP + H(+)</text>
        <dbReference type="Rhea" id="RHEA:16373"/>
        <dbReference type="ChEBI" id="CHEBI:10986"/>
        <dbReference type="ChEBI" id="CHEBI:15378"/>
        <dbReference type="ChEBI" id="CHEBI:29032"/>
        <dbReference type="ChEBI" id="CHEBI:30616"/>
        <dbReference type="ChEBI" id="CHEBI:456216"/>
        <dbReference type="EC" id="2.7.1.33"/>
    </reaction>
</comment>
<comment type="pathway">
    <text evidence="1">Cofactor biosynthesis; coenzyme A biosynthesis; CoA from (R)-pantothenate: step 1/5.</text>
</comment>
<comment type="subcellular location">
    <subcellularLocation>
        <location evidence="1">Cytoplasm</location>
    </subcellularLocation>
</comment>
<comment type="similarity">
    <text evidence="1">Belongs to the prokaryotic pantothenate kinase family.</text>
</comment>
<name>COAA_HISS1</name>
<organism>
    <name type="scientific">Histophilus somni (strain 129Pt)</name>
    <name type="common">Haemophilus somnus</name>
    <dbReference type="NCBI Taxonomy" id="205914"/>
    <lineage>
        <taxon>Bacteria</taxon>
        <taxon>Pseudomonadati</taxon>
        <taxon>Pseudomonadota</taxon>
        <taxon>Gammaproteobacteria</taxon>
        <taxon>Pasteurellales</taxon>
        <taxon>Pasteurellaceae</taxon>
        <taxon>Histophilus</taxon>
    </lineage>
</organism>
<accession>Q0I1U8</accession>
<proteinExistence type="inferred from homology"/>
<keyword id="KW-0067">ATP-binding</keyword>
<keyword id="KW-0173">Coenzyme A biosynthesis</keyword>
<keyword id="KW-0963">Cytoplasm</keyword>
<keyword id="KW-0418">Kinase</keyword>
<keyword id="KW-0547">Nucleotide-binding</keyword>
<keyword id="KW-0808">Transferase</keyword>
<feature type="chain" id="PRO_1000043217" description="Pantothenate kinase">
    <location>
        <begin position="1"/>
        <end position="317"/>
    </location>
</feature>
<feature type="binding site" evidence="1">
    <location>
        <begin position="99"/>
        <end position="106"/>
    </location>
    <ligand>
        <name>ATP</name>
        <dbReference type="ChEBI" id="CHEBI:30616"/>
    </ligand>
</feature>
<gene>
    <name evidence="1" type="primary">coaA</name>
    <name type="ordered locus">HS_0196</name>
</gene>